<accession>A4IRD9</accession>
<reference key="1">
    <citation type="journal article" date="2007" name="Proc. Natl. Acad. Sci. U.S.A.">
        <title>Genome and proteome of long-chain alkane degrading Geobacillus thermodenitrificans NG80-2 isolated from a deep-subsurface oil reservoir.</title>
        <authorList>
            <person name="Feng L."/>
            <person name="Wang W."/>
            <person name="Cheng J."/>
            <person name="Ren Y."/>
            <person name="Zhao G."/>
            <person name="Gao C."/>
            <person name="Tang Y."/>
            <person name="Liu X."/>
            <person name="Han W."/>
            <person name="Peng X."/>
            <person name="Liu R."/>
            <person name="Wang L."/>
        </authorList>
    </citation>
    <scope>NUCLEOTIDE SEQUENCE [LARGE SCALE GENOMIC DNA]</scope>
    <source>
        <strain>NG80-2</strain>
    </source>
</reference>
<evidence type="ECO:0000255" key="1">
    <source>
        <dbReference type="PROSITE-ProRule" id="PRU01182"/>
    </source>
</evidence>
<evidence type="ECO:0000305" key="2"/>
<dbReference type="EMBL" id="CP000557">
    <property type="protein sequence ID" value="ABO67893.1"/>
    <property type="molecule type" value="Genomic_DNA"/>
</dbReference>
<dbReference type="RefSeq" id="WP_008881076.1">
    <property type="nucleotide sequence ID" value="NC_009328.1"/>
</dbReference>
<dbReference type="SMR" id="A4IRD9"/>
<dbReference type="KEGG" id="gtn:GTNG_2548"/>
<dbReference type="eggNOG" id="COG2003">
    <property type="taxonomic scope" value="Bacteria"/>
</dbReference>
<dbReference type="HOGENOM" id="CLU_073529_0_2_9"/>
<dbReference type="Proteomes" id="UP000001578">
    <property type="component" value="Chromosome"/>
</dbReference>
<dbReference type="GO" id="GO:0046872">
    <property type="term" value="F:metal ion binding"/>
    <property type="evidence" value="ECO:0007669"/>
    <property type="project" value="UniProtKB-KW"/>
</dbReference>
<dbReference type="GO" id="GO:0008237">
    <property type="term" value="F:metallopeptidase activity"/>
    <property type="evidence" value="ECO:0007669"/>
    <property type="project" value="UniProtKB-KW"/>
</dbReference>
<dbReference type="GO" id="GO:0006508">
    <property type="term" value="P:proteolysis"/>
    <property type="evidence" value="ECO:0007669"/>
    <property type="project" value="UniProtKB-KW"/>
</dbReference>
<dbReference type="CDD" id="cd08071">
    <property type="entry name" value="MPN_DUF2466"/>
    <property type="match status" value="1"/>
</dbReference>
<dbReference type="Gene3D" id="1.10.150.20">
    <property type="entry name" value="5' to 3' exonuclease, C-terminal subdomain"/>
    <property type="match status" value="1"/>
</dbReference>
<dbReference type="Gene3D" id="3.40.140.10">
    <property type="entry name" value="Cytidine Deaminase, domain 2"/>
    <property type="match status" value="1"/>
</dbReference>
<dbReference type="InterPro" id="IPR037518">
    <property type="entry name" value="MPN"/>
</dbReference>
<dbReference type="InterPro" id="IPR025657">
    <property type="entry name" value="RadC_JAB"/>
</dbReference>
<dbReference type="InterPro" id="IPR010994">
    <property type="entry name" value="RuvA_2-like"/>
</dbReference>
<dbReference type="InterPro" id="IPR001405">
    <property type="entry name" value="UPF0758"/>
</dbReference>
<dbReference type="InterPro" id="IPR020891">
    <property type="entry name" value="UPF0758_CS"/>
</dbReference>
<dbReference type="InterPro" id="IPR046778">
    <property type="entry name" value="UPF0758_N"/>
</dbReference>
<dbReference type="NCBIfam" id="NF000642">
    <property type="entry name" value="PRK00024.1"/>
    <property type="match status" value="1"/>
</dbReference>
<dbReference type="NCBIfam" id="TIGR00608">
    <property type="entry name" value="radc"/>
    <property type="match status" value="1"/>
</dbReference>
<dbReference type="PANTHER" id="PTHR30471">
    <property type="entry name" value="DNA REPAIR PROTEIN RADC"/>
    <property type="match status" value="1"/>
</dbReference>
<dbReference type="PANTHER" id="PTHR30471:SF3">
    <property type="entry name" value="UPF0758 PROTEIN YEES-RELATED"/>
    <property type="match status" value="1"/>
</dbReference>
<dbReference type="Pfam" id="PF04002">
    <property type="entry name" value="RadC"/>
    <property type="match status" value="1"/>
</dbReference>
<dbReference type="Pfam" id="PF20582">
    <property type="entry name" value="UPF0758_N"/>
    <property type="match status" value="1"/>
</dbReference>
<dbReference type="SUPFAM" id="SSF102712">
    <property type="entry name" value="JAB1/MPN domain"/>
    <property type="match status" value="1"/>
</dbReference>
<dbReference type="SUPFAM" id="SSF47781">
    <property type="entry name" value="RuvA domain 2-like"/>
    <property type="match status" value="1"/>
</dbReference>
<dbReference type="PROSITE" id="PS50249">
    <property type="entry name" value="MPN"/>
    <property type="match status" value="1"/>
</dbReference>
<dbReference type="PROSITE" id="PS01302">
    <property type="entry name" value="UPF0758"/>
    <property type="match status" value="1"/>
</dbReference>
<gene>
    <name type="ordered locus">GTNG_2548</name>
</gene>
<organism>
    <name type="scientific">Geobacillus thermodenitrificans (strain NG80-2)</name>
    <dbReference type="NCBI Taxonomy" id="420246"/>
    <lineage>
        <taxon>Bacteria</taxon>
        <taxon>Bacillati</taxon>
        <taxon>Bacillota</taxon>
        <taxon>Bacilli</taxon>
        <taxon>Bacillales</taxon>
        <taxon>Anoxybacillaceae</taxon>
        <taxon>Geobacillus</taxon>
    </lineage>
</organism>
<sequence length="226" mass="25532">MTWMIRDVPKDSRPRERLLASGPESLSDHELLAILLRTGTKDESVVQLAQRVLQHFEGLRLLKDATVEEMTSIKGIGPTKAVQILAALELGRRIHQSGYNDRYVIRCPEDGAKYVMEDMRFLSQEHFVAIYLNTKNQVIHRKTVFIGSLNASIVHPREVFKEAIKRSAASVICVHNHPSGDPTPSREDIDVTKRLAECGRIIGIELLDHLIIGDQKFISLKEKGYV</sequence>
<proteinExistence type="inferred from homology"/>
<protein>
    <recommendedName>
        <fullName>UPF0758 protein GTNG_2548</fullName>
    </recommendedName>
</protein>
<keyword id="KW-0378">Hydrolase</keyword>
<keyword id="KW-0479">Metal-binding</keyword>
<keyword id="KW-0482">Metalloprotease</keyword>
<keyword id="KW-0645">Protease</keyword>
<keyword id="KW-0862">Zinc</keyword>
<feature type="chain" id="PRO_1000001657" description="UPF0758 protein GTNG_2548">
    <location>
        <begin position="1"/>
        <end position="226"/>
    </location>
</feature>
<feature type="domain" description="MPN" evidence="1">
    <location>
        <begin position="104"/>
        <end position="226"/>
    </location>
</feature>
<feature type="short sequence motif" description="JAMM motif" evidence="1">
    <location>
        <begin position="175"/>
        <end position="188"/>
    </location>
</feature>
<feature type="binding site" evidence="1">
    <location>
        <position position="175"/>
    </location>
    <ligand>
        <name>Zn(2+)</name>
        <dbReference type="ChEBI" id="CHEBI:29105"/>
        <note>catalytic</note>
    </ligand>
</feature>
<feature type="binding site" evidence="1">
    <location>
        <position position="177"/>
    </location>
    <ligand>
        <name>Zn(2+)</name>
        <dbReference type="ChEBI" id="CHEBI:29105"/>
        <note>catalytic</note>
    </ligand>
</feature>
<feature type="binding site" evidence="1">
    <location>
        <position position="188"/>
    </location>
    <ligand>
        <name>Zn(2+)</name>
        <dbReference type="ChEBI" id="CHEBI:29105"/>
        <note>catalytic</note>
    </ligand>
</feature>
<comment type="similarity">
    <text evidence="2">Belongs to the UPF0758 family.</text>
</comment>
<name>Y2548_GEOTN</name>